<feature type="signal peptide" evidence="1">
    <location>
        <begin position="1"/>
        <end position="20"/>
    </location>
</feature>
<feature type="chain" id="PRO_5007652867" description="RxLR effector protein PSR1">
    <location>
        <begin position="21"/>
        <end position="106"/>
    </location>
</feature>
<feature type="region of interest" description="WY domain" evidence="9">
    <location>
        <begin position="50"/>
        <end position="106"/>
    </location>
</feature>
<feature type="short sequence motif" description="RxLR-dEER" evidence="8">
    <location>
        <begin position="33"/>
        <end position="46"/>
    </location>
</feature>
<feature type="short sequence motif" description="Bipartite nuclear localization signal (NLS)" evidence="2">
    <location>
        <begin position="56"/>
        <end position="69"/>
    </location>
</feature>
<feature type="mutagenesis site" description="Loses the nuclear localization as well as the RNA silencing 3suppression activity." evidence="2">
    <original>RKMLGDETYRLKKF</original>
    <variation>AAAAAAAAAAAAAA</variation>
    <location>
        <begin position="56"/>
        <end position="69"/>
    </location>
</feature>
<feature type="mutagenesis site" description="Abolishes the interaction with host target PINP1 and lowers the size of lesions in leaves after infection." evidence="4">
    <original>W</original>
    <variation>A</variation>
    <location>
        <position position="72"/>
    </location>
</feature>
<feature type="mutagenesis site" description="LAbolishes the interaction with host target PINP1 and lowers the size of lesions in leaves after infection." evidence="4">
    <original>Y</original>
    <variation>A</variation>
    <location>
        <position position="100"/>
    </location>
</feature>
<proteinExistence type="evidence at protein level"/>
<reference key="1">
    <citation type="journal article" date="2011" name="Plant Cell">
        <title>Transcriptional programming and functional interactions within the Phytophthora sojae RXLR effector repertoire.</title>
        <authorList>
            <person name="Wang Q."/>
            <person name="Han C."/>
            <person name="Ferreira A.O."/>
            <person name="Yu X."/>
            <person name="Ye W."/>
            <person name="Tripathy S."/>
            <person name="Kale S.D."/>
            <person name="Gu B."/>
            <person name="Sheng Y."/>
            <person name="Sui Y."/>
            <person name="Wang X."/>
            <person name="Zhang Z."/>
            <person name="Cheng B."/>
            <person name="Dong S."/>
            <person name="Shan W."/>
            <person name="Zheng X."/>
            <person name="Dou D."/>
            <person name="Tyler B.M."/>
            <person name="Wang Y."/>
        </authorList>
    </citation>
    <scope>NUCLEOTIDE SEQUENCE [GENOMIC DNA]</scope>
    <scope>DOMAIN</scope>
    <source>
        <strain>P7074</strain>
        <strain>P7076</strain>
    </source>
</reference>
<reference key="2">
    <citation type="journal article" date="2013" name="Nat. Genet.">
        <title>Oomycete pathogens encode RNA silencing suppressors.</title>
        <authorList>
            <person name="Qiao Y."/>
            <person name="Liu L."/>
            <person name="Xiong Q."/>
            <person name="Flores C."/>
            <person name="Wong J."/>
            <person name="Shi J."/>
            <person name="Wang X."/>
            <person name="Liu X."/>
            <person name="Xiang Q."/>
            <person name="Jiang S."/>
            <person name="Zhang F."/>
            <person name="Wang Y."/>
            <person name="Judelson H.S."/>
            <person name="Chen X."/>
            <person name="Ma W."/>
        </authorList>
    </citation>
    <scope>FUNCTION</scope>
    <scope>DOMAIN</scope>
    <scope>SUBCELLULAR LOCATION</scope>
    <scope>MUTAGENESIS OF 56-ARG--PHE-69</scope>
</reference>
<reference key="3">
    <citation type="journal article" date="2015" name="Proc. Natl. Acad. Sci. U.S.A.">
        <title>Phytophthora effector targets a novel component of small RNA pathway in plants to promote infection.</title>
        <authorList>
            <person name="Qiao Y."/>
            <person name="Shi J."/>
            <person name="Zhai Y."/>
            <person name="Hou Y."/>
            <person name="Ma W."/>
        </authorList>
    </citation>
    <scope>FUNCTION</scope>
    <scope>INTERACTION WITH HOST PINP1</scope>
</reference>
<reference key="4">
    <citation type="journal article" date="2019" name="New Phytol.">
        <title>The WY domain in the Phytophthora effector PSR1 is required for infection and RNA silencing suppression activity.</title>
        <authorList>
            <person name="Zhang P."/>
            <person name="Jia Y."/>
            <person name="Shi J."/>
            <person name="Chen C."/>
            <person name="Ye W."/>
            <person name="Wang Y."/>
            <person name="Ma W."/>
            <person name="Qiao Y."/>
        </authorList>
    </citation>
    <scope>FUNCTION</scope>
    <scope>DOMAIN</scope>
    <scope>MUTAGENESIS OF TRP-72 AND TYR-100</scope>
</reference>
<comment type="function">
    <text evidence="2 3 4">Secreted effector that possesses RNA silencing suppression activity by inhibiting the biogenesis of small RNAs in the host plant to promote enhanced susceptibility of host to the pathogen during infection (PubMed:23377181, PubMed:25902521, PubMed:30963588). Interferes with secondary siRNA production by associating with host nuclear protein PINP1 that acts as a regulator of the accumulation of both microRNAs and endogenous small interfering RNAs (PubMed:25902521).</text>
</comment>
<comment type="subunit">
    <text evidence="3">Interacts with host PINP1.</text>
</comment>
<comment type="subcellular location">
    <subcellularLocation>
        <location evidence="3">Secreted</location>
    </subcellularLocation>
    <subcellularLocation>
        <location evidence="3">Host nucleus</location>
    </subcellularLocation>
    <text evidence="3">The nuclear localization is required for this interaction.</text>
</comment>
<comment type="domain">
    <text evidence="8">The RxLR-dEER motif acts to carry the protein into the host cell cytoplasm through binding to cell surface phosphatidylinositol-3-phosphate.</text>
</comment>
<comment type="domain">
    <text evidence="2">The nuclear localization signal (NLS) is required for localization to the host nucleus and RNA silencing suppression activity.</text>
</comment>
<comment type="domain">
    <text evidence="4">The single WY domain is required for binding to host PINP1 and subsequent RNA-silencing suppression activity, pathogenicity and perturbation of plant development.</text>
</comment>
<comment type="similarity">
    <text evidence="7">Belongs to the RxLR effector family.</text>
</comment>
<keyword id="KW-1048">Host nucleus</keyword>
<keyword id="KW-0964">Secreted</keyword>
<keyword id="KW-0732">Signal</keyword>
<keyword id="KW-0843">Virulence</keyword>
<dbReference type="EMBL" id="JN253674">
    <property type="protein sequence ID" value="AEK80487.1"/>
    <property type="molecule type" value="Genomic_DNA"/>
</dbReference>
<dbReference type="EMBL" id="JN253675">
    <property type="protein sequence ID" value="AEK80488.1"/>
    <property type="molecule type" value="Genomic_DNA"/>
</dbReference>
<dbReference type="KEGG" id="psoj:PHYSODRAFT_284677"/>
<dbReference type="VEuPathDB" id="FungiDB:PHYSODRAFT_284677"/>
<dbReference type="HOGENOM" id="CLU_2228539_0_0_1"/>
<dbReference type="OrthoDB" id="10388331at2759"/>
<dbReference type="GO" id="GO:0005576">
    <property type="term" value="C:extracellular region"/>
    <property type="evidence" value="ECO:0007669"/>
    <property type="project" value="UniProtKB-SubCell"/>
</dbReference>
<dbReference type="GO" id="GO:0042025">
    <property type="term" value="C:host cell nucleus"/>
    <property type="evidence" value="ECO:0007669"/>
    <property type="project" value="UniProtKB-SubCell"/>
</dbReference>
<dbReference type="InterPro" id="IPR031825">
    <property type="entry name" value="RXLR"/>
</dbReference>
<dbReference type="Pfam" id="PF16810">
    <property type="entry name" value="RXLR"/>
    <property type="match status" value="1"/>
</dbReference>
<name>PSR1_PHYSO</name>
<evidence type="ECO:0000255" key="1"/>
<evidence type="ECO:0000269" key="2">
    <source>
    </source>
</evidence>
<evidence type="ECO:0000269" key="3">
    <source>
    </source>
</evidence>
<evidence type="ECO:0000269" key="4">
    <source>
    </source>
</evidence>
<evidence type="ECO:0000303" key="5">
    <source>
    </source>
</evidence>
<evidence type="ECO:0000303" key="6">
    <source>
    </source>
</evidence>
<evidence type="ECO:0000305" key="7"/>
<evidence type="ECO:0000305" key="8">
    <source>
    </source>
</evidence>
<evidence type="ECO:0000305" key="9">
    <source>
    </source>
</evidence>
<organism>
    <name type="scientific">Phytophthora sojae</name>
    <name type="common">Soybean stem and root rot agent</name>
    <name type="synonym">Phytophthora megasperma f. sp. glycines</name>
    <dbReference type="NCBI Taxonomy" id="67593"/>
    <lineage>
        <taxon>Eukaryota</taxon>
        <taxon>Sar</taxon>
        <taxon>Stramenopiles</taxon>
        <taxon>Oomycota</taxon>
        <taxon>Peronosporales</taxon>
        <taxon>Peronosporaceae</taxon>
        <taxon>Phytophthora</taxon>
    </lineage>
</organism>
<gene>
    <name evidence="6" type="primary">PSR1</name>
    <name evidence="5" type="synonym">Avh18</name>
</gene>
<protein>
    <recommendedName>
        <fullName evidence="5">RxLR effector protein PSR1</fullName>
    </recommendedName>
    <alternativeName>
        <fullName evidence="5">Avirulence homolog protein 18</fullName>
    </alternativeName>
    <alternativeName>
        <fullName evidence="6">Suppressor of RNA silencing protein 1</fullName>
    </alternativeName>
</protein>
<sequence length="106" mass="12304">MRLTYVLLVAVTTLLVSCDATKPSTEATAVSKRLLRFVEAADEEERRIDFSPEKLRKMLGDETYRLKKFGKWDSDGHTFDGLKHYLLLSDSSMVKLRNMYKAWLEQ</sequence>
<accession>E0W5Q5</accession>